<dbReference type="EC" id="2.7.11.1" evidence="1"/>
<dbReference type="SMR" id="A0A8I5ZNK2"/>
<dbReference type="FunCoup" id="A0A8I5ZNK2">
    <property type="interactions" value="4026"/>
</dbReference>
<dbReference type="iPTMnet" id="A0A8I5ZNK2"/>
<dbReference type="PhosphoSitePlus" id="A0A8I5ZNK2"/>
<dbReference type="Ensembl" id="ENSRNOT00000099478.1">
    <property type="protein sequence ID" value="ENSRNOP00000079676.1"/>
    <property type="gene ID" value="ENSRNOG00000013136.7"/>
</dbReference>
<dbReference type="AGR" id="RGD:1310466"/>
<dbReference type="RGD" id="1310466">
    <property type="gene designation" value="Oxsr1"/>
</dbReference>
<dbReference type="GeneTree" id="ENSGT00940000154621"/>
<dbReference type="OMA" id="KMRTANC"/>
<dbReference type="OrthoDB" id="8693905at2759"/>
<dbReference type="PRO" id="PR:A0A8I5ZNK2"/>
<dbReference type="Proteomes" id="UP000002494">
    <property type="component" value="Chromosome 8"/>
</dbReference>
<dbReference type="GO" id="GO:0005737">
    <property type="term" value="C:cytoplasm"/>
    <property type="evidence" value="ECO:0000266"/>
    <property type="project" value="RGD"/>
</dbReference>
<dbReference type="GO" id="GO:0005829">
    <property type="term" value="C:cytosol"/>
    <property type="evidence" value="ECO:0000318"/>
    <property type="project" value="GO_Central"/>
</dbReference>
<dbReference type="GO" id="GO:0005524">
    <property type="term" value="F:ATP binding"/>
    <property type="evidence" value="ECO:0000266"/>
    <property type="project" value="RGD"/>
</dbReference>
<dbReference type="GO" id="GO:0042802">
    <property type="term" value="F:identical protein binding"/>
    <property type="evidence" value="ECO:0000266"/>
    <property type="project" value="RGD"/>
</dbReference>
<dbReference type="GO" id="GO:0000287">
    <property type="term" value="F:magnesium ion binding"/>
    <property type="evidence" value="ECO:0000266"/>
    <property type="project" value="RGD"/>
</dbReference>
<dbReference type="GO" id="GO:0019901">
    <property type="term" value="F:protein kinase binding"/>
    <property type="evidence" value="ECO:0000266"/>
    <property type="project" value="RGD"/>
</dbReference>
<dbReference type="GO" id="GO:0004674">
    <property type="term" value="F:protein serine/threonine kinase activity"/>
    <property type="evidence" value="ECO:0000314"/>
    <property type="project" value="UniProtKB"/>
</dbReference>
<dbReference type="GO" id="GO:0006884">
    <property type="term" value="P:cell volume homeostasis"/>
    <property type="evidence" value="ECO:0000266"/>
    <property type="project" value="RGD"/>
</dbReference>
<dbReference type="GO" id="GO:0071474">
    <property type="term" value="P:cellular hyperosmotic response"/>
    <property type="evidence" value="ECO:0000266"/>
    <property type="project" value="RGD"/>
</dbReference>
<dbReference type="GO" id="GO:0071476">
    <property type="term" value="P:cellular hypotonic response"/>
    <property type="evidence" value="ECO:0000266"/>
    <property type="project" value="RGD"/>
</dbReference>
<dbReference type="GO" id="GO:1990869">
    <property type="term" value="P:cellular response to chemokine"/>
    <property type="evidence" value="ECO:0000266"/>
    <property type="project" value="RGD"/>
</dbReference>
<dbReference type="GO" id="GO:0038116">
    <property type="term" value="P:chemokine (C-C motif) ligand 21 signaling pathway"/>
    <property type="evidence" value="ECO:0000266"/>
    <property type="project" value="RGD"/>
</dbReference>
<dbReference type="GO" id="GO:0038146">
    <property type="term" value="P:chemokine (C-X-C motif) ligand 12 signaling pathway"/>
    <property type="evidence" value="ECO:0000266"/>
    <property type="project" value="RGD"/>
</dbReference>
<dbReference type="GO" id="GO:0035556">
    <property type="term" value="P:intracellular signal transduction"/>
    <property type="evidence" value="ECO:0000266"/>
    <property type="project" value="RGD"/>
</dbReference>
<dbReference type="GO" id="GO:1901380">
    <property type="term" value="P:negative regulation of potassium ion transmembrane transport"/>
    <property type="evidence" value="ECO:0000266"/>
    <property type="project" value="RGD"/>
</dbReference>
<dbReference type="GO" id="GO:0007231">
    <property type="term" value="P:osmosensory signaling pathway"/>
    <property type="evidence" value="ECO:0000266"/>
    <property type="project" value="RGD"/>
</dbReference>
<dbReference type="GO" id="GO:0010820">
    <property type="term" value="P:positive regulation of T cell chemotaxis"/>
    <property type="evidence" value="ECO:0000266"/>
    <property type="project" value="RGD"/>
</dbReference>
<dbReference type="GO" id="GO:0070294">
    <property type="term" value="P:renal sodium ion absorption"/>
    <property type="evidence" value="ECO:0000266"/>
    <property type="project" value="RGD"/>
</dbReference>
<dbReference type="GO" id="GO:0006979">
    <property type="term" value="P:response to oxidative stress"/>
    <property type="evidence" value="ECO:0000266"/>
    <property type="project" value="RGD"/>
</dbReference>
<dbReference type="GO" id="GO:0009410">
    <property type="term" value="P:response to xenobiotic stimulus"/>
    <property type="evidence" value="ECO:0000266"/>
    <property type="project" value="RGD"/>
</dbReference>
<dbReference type="GO" id="GO:0007165">
    <property type="term" value="P:signal transduction"/>
    <property type="evidence" value="ECO:0000266"/>
    <property type="project" value="RGD"/>
</dbReference>
<dbReference type="CDD" id="cd06610">
    <property type="entry name" value="STKc_OSR1_SPAK"/>
    <property type="match status" value="1"/>
</dbReference>
<dbReference type="FunFam" id="3.10.20.90:FF:000043">
    <property type="entry name" value="serine/threonine-protein kinase OSR1 isoform X1"/>
    <property type="match status" value="1"/>
</dbReference>
<dbReference type="FunFam" id="3.30.200.20:FF:000114">
    <property type="entry name" value="serine/threonine-protein kinase OSR1 isoform X1"/>
    <property type="match status" value="1"/>
</dbReference>
<dbReference type="FunFam" id="1.10.510.10:FF:000068">
    <property type="entry name" value="STE20/SPS1-related proline-alanine-rich protein kinase"/>
    <property type="match status" value="1"/>
</dbReference>
<dbReference type="Gene3D" id="3.10.20.90">
    <property type="entry name" value="Phosphatidylinositol 3-kinase Catalytic Subunit, Chain A, domain 1"/>
    <property type="match status" value="1"/>
</dbReference>
<dbReference type="Gene3D" id="3.30.200.20">
    <property type="entry name" value="Phosphorylase Kinase, domain 1"/>
    <property type="match status" value="1"/>
</dbReference>
<dbReference type="Gene3D" id="1.10.510.10">
    <property type="entry name" value="Transferase(Phosphotransferase) domain 1"/>
    <property type="match status" value="1"/>
</dbReference>
<dbReference type="InterPro" id="IPR011009">
    <property type="entry name" value="Kinase-like_dom_sf"/>
</dbReference>
<dbReference type="InterPro" id="IPR024678">
    <property type="entry name" value="Kinase_OSR1/WNK_CCT"/>
</dbReference>
<dbReference type="InterPro" id="IPR000719">
    <property type="entry name" value="Prot_kinase_dom"/>
</dbReference>
<dbReference type="InterPro" id="IPR017441">
    <property type="entry name" value="Protein_kinase_ATP_BS"/>
</dbReference>
<dbReference type="InterPro" id="IPR050629">
    <property type="entry name" value="STE20/SPS1-PAK"/>
</dbReference>
<dbReference type="PANTHER" id="PTHR48012:SF1">
    <property type="entry name" value="SERINE_THREONINE-PROTEIN KINASE OSR1"/>
    <property type="match status" value="1"/>
</dbReference>
<dbReference type="PANTHER" id="PTHR48012">
    <property type="entry name" value="STERILE20-LIKE KINASE, ISOFORM B-RELATED"/>
    <property type="match status" value="1"/>
</dbReference>
<dbReference type="Pfam" id="PF12202">
    <property type="entry name" value="OSR1_C"/>
    <property type="match status" value="1"/>
</dbReference>
<dbReference type="Pfam" id="PF00069">
    <property type="entry name" value="Pkinase"/>
    <property type="match status" value="1"/>
</dbReference>
<dbReference type="SMART" id="SM00220">
    <property type="entry name" value="S_TKc"/>
    <property type="match status" value="1"/>
</dbReference>
<dbReference type="SUPFAM" id="SSF56112">
    <property type="entry name" value="Protein kinase-like (PK-like)"/>
    <property type="match status" value="1"/>
</dbReference>
<dbReference type="PROSITE" id="PS00107">
    <property type="entry name" value="PROTEIN_KINASE_ATP"/>
    <property type="match status" value="1"/>
</dbReference>
<dbReference type="PROSITE" id="PS50011">
    <property type="entry name" value="PROTEIN_KINASE_DOM"/>
    <property type="match status" value="1"/>
</dbReference>
<reference key="1">
    <citation type="journal article" date="2004" name="Nature">
        <title>Genome sequence of the Brown Norway rat yields insights into mammalian evolution.</title>
        <authorList>
            <person name="Gibbs R.A."/>
            <person name="Weinstock G.M."/>
            <person name="Metzker M.L."/>
            <person name="Muzny D.M."/>
            <person name="Sodergren E.J."/>
            <person name="Scherer S."/>
            <person name="Scott G."/>
            <person name="Steffen D."/>
            <person name="Worley K.C."/>
            <person name="Burch P.E."/>
            <person name="Okwuonu G."/>
            <person name="Hines S."/>
            <person name="Lewis L."/>
            <person name="Deramo C."/>
            <person name="Delgado O."/>
            <person name="Dugan-Rocha S."/>
            <person name="Miner G."/>
            <person name="Morgan M."/>
            <person name="Hawes A."/>
            <person name="Gill R."/>
            <person name="Holt R.A."/>
            <person name="Adams M.D."/>
            <person name="Amanatides P.G."/>
            <person name="Baden-Tillson H."/>
            <person name="Barnstead M."/>
            <person name="Chin S."/>
            <person name="Evans C.A."/>
            <person name="Ferriera S."/>
            <person name="Fosler C."/>
            <person name="Glodek A."/>
            <person name="Gu Z."/>
            <person name="Jennings D."/>
            <person name="Kraft C.L."/>
            <person name="Nguyen T."/>
            <person name="Pfannkoch C.M."/>
            <person name="Sitter C."/>
            <person name="Sutton G.G."/>
            <person name="Venter J.C."/>
            <person name="Woodage T."/>
            <person name="Smith D."/>
            <person name="Lee H.-M."/>
            <person name="Gustafson E."/>
            <person name="Cahill P."/>
            <person name="Kana A."/>
            <person name="Doucette-Stamm L."/>
            <person name="Weinstock K."/>
            <person name="Fechtel K."/>
            <person name="Weiss R.B."/>
            <person name="Dunn D.M."/>
            <person name="Green E.D."/>
            <person name="Blakesley R.W."/>
            <person name="Bouffard G.G."/>
            <person name="De Jong P.J."/>
            <person name="Osoegawa K."/>
            <person name="Zhu B."/>
            <person name="Marra M."/>
            <person name="Schein J."/>
            <person name="Bosdet I."/>
            <person name="Fjell C."/>
            <person name="Jones S."/>
            <person name="Krzywinski M."/>
            <person name="Mathewson C."/>
            <person name="Siddiqui A."/>
            <person name="Wye N."/>
            <person name="McPherson J."/>
            <person name="Zhao S."/>
            <person name="Fraser C.M."/>
            <person name="Shetty J."/>
            <person name="Shatsman S."/>
            <person name="Geer K."/>
            <person name="Chen Y."/>
            <person name="Abramzon S."/>
            <person name="Nierman W.C."/>
            <person name="Havlak P.H."/>
            <person name="Chen R."/>
            <person name="Durbin K.J."/>
            <person name="Egan A."/>
            <person name="Ren Y."/>
            <person name="Song X.-Z."/>
            <person name="Li B."/>
            <person name="Liu Y."/>
            <person name="Qin X."/>
            <person name="Cawley S."/>
            <person name="Cooney A.J."/>
            <person name="D'Souza L.M."/>
            <person name="Martin K."/>
            <person name="Wu J.Q."/>
            <person name="Gonzalez-Garay M.L."/>
            <person name="Jackson A.R."/>
            <person name="Kalafus K.J."/>
            <person name="McLeod M.P."/>
            <person name="Milosavljevic A."/>
            <person name="Virk D."/>
            <person name="Volkov A."/>
            <person name="Wheeler D.A."/>
            <person name="Zhang Z."/>
            <person name="Bailey J.A."/>
            <person name="Eichler E.E."/>
            <person name="Tuzun E."/>
            <person name="Birney E."/>
            <person name="Mongin E."/>
            <person name="Ureta-Vidal A."/>
            <person name="Woodwark C."/>
            <person name="Zdobnov E."/>
            <person name="Bork P."/>
            <person name="Suyama M."/>
            <person name="Torrents D."/>
            <person name="Alexandersson M."/>
            <person name="Trask B.J."/>
            <person name="Young J.M."/>
            <person name="Huang H."/>
            <person name="Wang H."/>
            <person name="Xing H."/>
            <person name="Daniels S."/>
            <person name="Gietzen D."/>
            <person name="Schmidt J."/>
            <person name="Stevens K."/>
            <person name="Vitt U."/>
            <person name="Wingrove J."/>
            <person name="Camara F."/>
            <person name="Mar Alba M."/>
            <person name="Abril J.F."/>
            <person name="Guigo R."/>
            <person name="Smit A."/>
            <person name="Dubchak I."/>
            <person name="Rubin E.M."/>
            <person name="Couronne O."/>
            <person name="Poliakov A."/>
            <person name="Huebner N."/>
            <person name="Ganten D."/>
            <person name="Goesele C."/>
            <person name="Hummel O."/>
            <person name="Kreitler T."/>
            <person name="Lee Y.-A."/>
            <person name="Monti J."/>
            <person name="Schulz H."/>
            <person name="Zimdahl H."/>
            <person name="Himmelbauer H."/>
            <person name="Lehrach H."/>
            <person name="Jacob H.J."/>
            <person name="Bromberg S."/>
            <person name="Gullings-Handley J."/>
            <person name="Jensen-Seaman M.I."/>
            <person name="Kwitek A.E."/>
            <person name="Lazar J."/>
            <person name="Pasko D."/>
            <person name="Tonellato P.J."/>
            <person name="Twigger S."/>
            <person name="Ponting C.P."/>
            <person name="Duarte J.M."/>
            <person name="Rice S."/>
            <person name="Goodstadt L."/>
            <person name="Beatson S.A."/>
            <person name="Emes R.D."/>
            <person name="Winter E.E."/>
            <person name="Webber C."/>
            <person name="Brandt P."/>
            <person name="Nyakatura G."/>
            <person name="Adetobi M."/>
            <person name="Chiaromonte F."/>
            <person name="Elnitski L."/>
            <person name="Eswara P."/>
            <person name="Hardison R.C."/>
            <person name="Hou M."/>
            <person name="Kolbe D."/>
            <person name="Makova K."/>
            <person name="Miller W."/>
            <person name="Nekrutenko A."/>
            <person name="Riemer C."/>
            <person name="Schwartz S."/>
            <person name="Taylor J."/>
            <person name="Yang S."/>
            <person name="Zhang Y."/>
            <person name="Lindpaintner K."/>
            <person name="Andrews T.D."/>
            <person name="Caccamo M."/>
            <person name="Clamp M."/>
            <person name="Clarke L."/>
            <person name="Curwen V."/>
            <person name="Durbin R.M."/>
            <person name="Eyras E."/>
            <person name="Searle S.M."/>
            <person name="Cooper G.M."/>
            <person name="Batzoglou S."/>
            <person name="Brudno M."/>
            <person name="Sidow A."/>
            <person name="Stone E.A."/>
            <person name="Payseur B.A."/>
            <person name="Bourque G."/>
            <person name="Lopez-Otin C."/>
            <person name="Puente X.S."/>
            <person name="Chakrabarti K."/>
            <person name="Chatterji S."/>
            <person name="Dewey C."/>
            <person name="Pachter L."/>
            <person name="Bray N."/>
            <person name="Yap V.B."/>
            <person name="Caspi A."/>
            <person name="Tesler G."/>
            <person name="Pevzner P.A."/>
            <person name="Haussler D."/>
            <person name="Roskin K.M."/>
            <person name="Baertsch R."/>
            <person name="Clawson H."/>
            <person name="Furey T.S."/>
            <person name="Hinrichs A.S."/>
            <person name="Karolchik D."/>
            <person name="Kent W.J."/>
            <person name="Rosenbloom K.R."/>
            <person name="Trumbower H."/>
            <person name="Weirauch M."/>
            <person name="Cooper D.N."/>
            <person name="Stenson P.D."/>
            <person name="Ma B."/>
            <person name="Brent M."/>
            <person name="Arumugam M."/>
            <person name="Shteynberg D."/>
            <person name="Copley R.R."/>
            <person name="Taylor M.S."/>
            <person name="Riethman H."/>
            <person name="Mudunuri U."/>
            <person name="Peterson J."/>
            <person name="Guyer M."/>
            <person name="Felsenfeld A."/>
            <person name="Old S."/>
            <person name="Mockrin S."/>
            <person name="Collins F.S."/>
        </authorList>
    </citation>
    <scope>NUCLEOTIDE SEQUENCE [LARGE SCALE GENOMIC DNA]</scope>
    <source>
        <strain>Brown Norway</strain>
    </source>
</reference>
<reference key="2">
    <citation type="journal article" date="2005" name="Biochem. J.">
        <title>The WNK1 and WNK4 protein kinases that are mutated in Gordon's hypertension syndrome phosphorylate and activate SPAK and OSR1 protein kinases.</title>
        <authorList>
            <person name="Vitari A.C."/>
            <person name="Deak M."/>
            <person name="Morrice N.A."/>
            <person name="Alessi D.R."/>
        </authorList>
    </citation>
    <scope>ACTIVITY REGULATION</scope>
    <scope>PHOSPHORYLATION AT THR-185 AND SER-325</scope>
    <scope>MUTAGENESIS OF ASP-164 AND THR-185</scope>
</reference>
<reference key="3">
    <citation type="journal article" date="2012" name="J. Biol. Chem.">
        <title>Taurine inhibits K+-Cl- cotransporter KCC2 to regulate embryonic Cl- homeostasis via with-no-lysine (WNK) protein kinase signaling pathway.</title>
        <authorList>
            <person name="Inoue K."/>
            <person name="Furukawa T."/>
            <person name="Kumada T."/>
            <person name="Yamada J."/>
            <person name="Wang T."/>
            <person name="Inoue R."/>
            <person name="Fukuda A."/>
        </authorList>
    </citation>
    <scope>FUNCTION</scope>
    <scope>ACTIVITY REGULATION</scope>
    <scope>PHOSPHORYLATION AT SER-325</scope>
</reference>
<evidence type="ECO:0000250" key="1">
    <source>
        <dbReference type="UniProtKB" id="O95747"/>
    </source>
</evidence>
<evidence type="ECO:0000255" key="2">
    <source>
        <dbReference type="PROSITE-ProRule" id="PRU00159"/>
    </source>
</evidence>
<evidence type="ECO:0000256" key="3">
    <source>
        <dbReference type="SAM" id="MobiDB-lite"/>
    </source>
</evidence>
<evidence type="ECO:0000269" key="4">
    <source>
    </source>
</evidence>
<evidence type="ECO:0000269" key="5">
    <source>
    </source>
</evidence>
<evidence type="ECO:0000303" key="6">
    <source>
    </source>
</evidence>
<evidence type="ECO:0000305" key="7"/>
<evidence type="ECO:0000312" key="8">
    <source>
        <dbReference type="RGD" id="1310466"/>
    </source>
</evidence>
<sequence length="528" mass="58360">MSEDSSALPWSINRDDYELQEVIGSGATAVVQAAYCAPKKERVAIKRINLEKCQTSMDELLKEIQAMSQCHHPNIVSYYTSFVVKDELWLVMKLLSGGSVLDIIKHIVAKGEHKGGVLDESTIATILREVLEGLEYLHKNGQIHRDVKAGNILLGEDGSVQIADFGVSAFLATGGDITRNKVRKTFVGTPCWMAPEVMEQVRGYDFKADIWSFGITAIELATGAAPYHKYPPMKVLMLTLQNDPPSLDTGVQDKEMLKKYGKSFRKMISLCLQKDPEKRPTAAELLRHKFFQKAKNKEFLQEKILQRAPTISERSKKVRRVPGSSGRLHKTEDGGWEWSDDEFDEESEEGKAAISQLRSCPTQQHCLCLLQLFSAADPMGTLLQVPEQISAHLPQPASQMPTQPAQVSLLPPAEPAKPAQARSSGERSQETKVPISLVLRLRNSKKELNDIRFEFTPGRDTAEGVSQELISAGLVDGRDLVIVAANLQKIVEEPQSNRSVTFKLASGVEGSDIPDDGKLIGFAQLSIS</sequence>
<comment type="function">
    <text evidence="1 5">Effector serine/threonine-protein kinase component of the WNK-SPAK/OSR1 kinase cascade, which is involved in various processes, such as ion transport, response to hypertonic stress and blood pressure (PubMed:22544747). Specifically recognizes and binds proteins with a RFXV motif (By similarity). Acts downstream of WNK kinases (WNK1, WNK2, WNK3 or WNK4): following activation by WNK kinases, catalyzes phosphorylation of ion cotransporters, such as SLC12A1/NKCC2, SLC12A2/NKCC1, SLC12A3/NCC, SLC12A5/KCC2 or SLC12A6/KCC3, regulating their activity (By similarity). Mediates regulatory volume increase in response to hyperosmotic stress by catalyzing phosphorylation of ion cotransporters SLC12A1/NKCC2, SLC12A2/NKCC1 and SLC12A6/KCC3 downstream of WNK1 and WNK3 kinases (By similarity). Phosphorylation of Na-K-Cl cotransporters SLC12A2/NKCC1 and SLC12A2/NKCC1 promote their activation and ion influx; simultaneously, phosphorylation of K-Cl cotransporters SLC12A5/KCC2 and SLC12A6/KCC3 inhibit their activity, blocking ion efflux (PubMed:22544747). Acts as a regulator of NaCl reabsorption in the distal nephron by mediating phosphorylation and activation of the thiazide-sensitive Na-Cl cotransporter SLC12A3/NCC in distal convoluted tubule cells of kidney downstream of WNK4 (By similarity). Also acts as a regulator of angiogenesis in endothelial cells downstream of WNK1 (By similarity). Acts as an activator of inward rectifier potassium channels KCNJ2/Kir2.1 and KCNJ4/Kir2.3 downstream of WNK1: recognizes and binds the RXFXV/I variant motif on KCNJ2/Kir2.1 and KCNJ4/Kir2.3 and regulates their localization to the cell membrane without mediating their phosphorylation (By similarity). Phosphorylates RELL1, RELL2 and RELT (By similarity). Phosphorylates PAK1. Phosphorylates PLSCR1 in the presence of RELT (By similarity).</text>
</comment>
<comment type="catalytic activity">
    <reaction evidence="1">
        <text>L-seryl-[protein] + ATP = O-phospho-L-seryl-[protein] + ADP + H(+)</text>
        <dbReference type="Rhea" id="RHEA:17989"/>
        <dbReference type="Rhea" id="RHEA-COMP:9863"/>
        <dbReference type="Rhea" id="RHEA-COMP:11604"/>
        <dbReference type="ChEBI" id="CHEBI:15378"/>
        <dbReference type="ChEBI" id="CHEBI:29999"/>
        <dbReference type="ChEBI" id="CHEBI:30616"/>
        <dbReference type="ChEBI" id="CHEBI:83421"/>
        <dbReference type="ChEBI" id="CHEBI:456216"/>
        <dbReference type="EC" id="2.7.11.1"/>
    </reaction>
</comment>
<comment type="catalytic activity">
    <reaction evidence="1">
        <text>L-threonyl-[protein] + ATP = O-phospho-L-threonyl-[protein] + ADP + H(+)</text>
        <dbReference type="Rhea" id="RHEA:46608"/>
        <dbReference type="Rhea" id="RHEA-COMP:11060"/>
        <dbReference type="Rhea" id="RHEA-COMP:11605"/>
        <dbReference type="ChEBI" id="CHEBI:15378"/>
        <dbReference type="ChEBI" id="CHEBI:30013"/>
        <dbReference type="ChEBI" id="CHEBI:30616"/>
        <dbReference type="ChEBI" id="CHEBI:61977"/>
        <dbReference type="ChEBI" id="CHEBI:456216"/>
        <dbReference type="EC" id="2.7.11.1"/>
    </reaction>
</comment>
<comment type="cofactor">
    <cofactor evidence="1">
        <name>Mg(2+)</name>
        <dbReference type="ChEBI" id="CHEBI:18420"/>
    </cofactor>
</comment>
<comment type="activity regulation">
    <text evidence="4 5">Activated following phosphorylation by WNK kinases (WNK1, WNK2, WNK3 or WNK4).</text>
</comment>
<comment type="subcellular location">
    <subcellularLocation>
        <location evidence="1">Cytoplasm</location>
    </subcellularLocation>
</comment>
<comment type="PTM">
    <text evidence="1 4">Phosphorylation at Thr-185 by WNK kinases (WNK1, WNK2, WNK3 or WNK4) is required for activation (PubMed:16083423). Autophosphorylated; promoting its activity (By similarity).</text>
</comment>
<comment type="similarity">
    <text evidence="7">Belongs to the protein kinase superfamily. STE Ser/Thr protein kinase family. STE20 subfamily.</text>
</comment>
<feature type="initiator methionine" description="Removed" evidence="1">
    <location>
        <position position="1"/>
    </location>
</feature>
<feature type="chain" id="PRO_0000458460" description="Serine/threonine-protein kinase OSR1">
    <location>
        <begin position="2"/>
        <end position="528"/>
    </location>
</feature>
<feature type="domain" description="Protein kinase" evidence="2">
    <location>
        <begin position="17"/>
        <end position="291"/>
    </location>
</feature>
<feature type="region of interest" description="Disordered" evidence="3">
    <location>
        <begin position="313"/>
        <end position="350"/>
    </location>
</feature>
<feature type="region of interest" description="Disordered" evidence="3">
    <location>
        <begin position="394"/>
        <end position="429"/>
    </location>
</feature>
<feature type="compositionally biased region" description="Acidic residues" evidence="3">
    <location>
        <begin position="334"/>
        <end position="348"/>
    </location>
</feature>
<feature type="compositionally biased region" description="Polar residues" evidence="3">
    <location>
        <begin position="396"/>
        <end position="406"/>
    </location>
</feature>
<feature type="active site" description="Proton acceptor" evidence="2">
    <location>
        <position position="146"/>
    </location>
</feature>
<feature type="binding site" evidence="2">
    <location>
        <begin position="23"/>
        <end position="31"/>
    </location>
    <ligand>
        <name>ATP</name>
        <dbReference type="ChEBI" id="CHEBI:30616"/>
    </ligand>
</feature>
<feature type="binding site" evidence="2">
    <location>
        <position position="46"/>
    </location>
    <ligand>
        <name>ATP</name>
        <dbReference type="ChEBI" id="CHEBI:30616"/>
    </ligand>
</feature>
<feature type="modified residue" description="N-acetylserine" evidence="1">
    <location>
        <position position="2"/>
    </location>
</feature>
<feature type="modified residue" description="Phosphothreonine; by WNK1" evidence="4">
    <location>
        <position position="185"/>
    </location>
</feature>
<feature type="modified residue" description="Phosphothreonine" evidence="1">
    <location>
        <position position="310"/>
    </location>
</feature>
<feature type="modified residue" description="Phosphoserine" evidence="1">
    <location>
        <position position="324"/>
    </location>
</feature>
<feature type="modified residue" description="Phosphoserine" evidence="4 5">
    <location>
        <position position="325"/>
    </location>
</feature>
<feature type="modified residue" description="Phosphoserine" evidence="1">
    <location>
        <position position="339"/>
    </location>
</feature>
<feature type="modified residue" description="Phosphoserine" evidence="1">
    <location>
        <position position="347"/>
    </location>
</feature>
<feature type="modified residue" description="Phosphoserine" evidence="1">
    <location>
        <position position="359"/>
    </location>
</feature>
<feature type="modified residue" description="Phosphoserine" evidence="1">
    <location>
        <position position="428"/>
    </location>
</feature>
<feature type="mutagenesis site" description="Abolished serine/threonine-protein kinase activity." evidence="4">
    <original>D</original>
    <variation>A</variation>
    <location>
        <position position="164"/>
    </location>
</feature>
<feature type="mutagenesis site" description="Decreased serine/threonine-protein kinase activity." evidence="4">
    <original>T</original>
    <variation>A</variation>
    <location>
        <position position="185"/>
    </location>
</feature>
<feature type="mutagenesis site" description="Mimics phosphorylation; increased serine/threonine-protein kinase activity." evidence="4">
    <original>T</original>
    <variation>E</variation>
    <location>
        <position position="185"/>
    </location>
</feature>
<gene>
    <name evidence="8" type="primary">Oxsr1</name>
    <name evidence="6" type="synonym">Osr1</name>
</gene>
<protein>
    <recommendedName>
        <fullName>Serine/threonine-protein kinase OSR1</fullName>
        <ecNumber evidence="1">2.7.11.1</ecNumber>
    </recommendedName>
    <alternativeName>
        <fullName evidence="6">Oxidative stress-responsive 1 protein</fullName>
    </alternativeName>
</protein>
<organism>
    <name type="scientific">Rattus norvegicus</name>
    <name type="common">Rat</name>
    <dbReference type="NCBI Taxonomy" id="10116"/>
    <lineage>
        <taxon>Eukaryota</taxon>
        <taxon>Metazoa</taxon>
        <taxon>Chordata</taxon>
        <taxon>Craniata</taxon>
        <taxon>Vertebrata</taxon>
        <taxon>Euteleostomi</taxon>
        <taxon>Mammalia</taxon>
        <taxon>Eutheria</taxon>
        <taxon>Euarchontoglires</taxon>
        <taxon>Glires</taxon>
        <taxon>Rodentia</taxon>
        <taxon>Myomorpha</taxon>
        <taxon>Muroidea</taxon>
        <taxon>Muridae</taxon>
        <taxon>Murinae</taxon>
        <taxon>Rattus</taxon>
    </lineage>
</organism>
<accession>A0A8I5ZNK2</accession>
<accession>A0A8I5ZZD5</accession>
<name>OXSR1_RAT</name>
<keyword id="KW-0007">Acetylation</keyword>
<keyword id="KW-0067">ATP-binding</keyword>
<keyword id="KW-0963">Cytoplasm</keyword>
<keyword id="KW-0418">Kinase</keyword>
<keyword id="KW-0460">Magnesium</keyword>
<keyword id="KW-0479">Metal-binding</keyword>
<keyword id="KW-0547">Nucleotide-binding</keyword>
<keyword id="KW-0597">Phosphoprotein</keyword>
<keyword id="KW-1185">Reference proteome</keyword>
<keyword id="KW-0723">Serine/threonine-protein kinase</keyword>
<keyword id="KW-0808">Transferase</keyword>
<proteinExistence type="evidence at protein level"/>